<sequence length="481" mass="52585">MCWRELLYMLPELYLLGSAMIALLLGIVVDARWVHRLSAVSMGVVVVLSWWSGVTDHVAEDVHLFNGLVLHTRYTCISRMLVGVAGFVASLLFLCARREVRYEFSVVMLFATLGAMTLVQAGHFLSLYISLELNSLSSCVLVCFNRSSERASESALKFFILSALSSCIMLYGISLVYGYSTGLECNVMQEILAGRASLGATLGCAFVLVGVLFKLAVVPFHMWAVDTYHGSPMAAMAFFLIVTKSAAILLLARIVGENGILQQSILYGIISVSGLSALVGELGALRQSNIKRLLAYSNIGQLGYVLPVVVLHGTSSYAIFHYVLTSWVINAWIFSVLLRYDDEGFELASLAGMHRSSPFVAFALVVSMVSAAGFPPFLGCWPKYFFLKSIVMSDIPTVVAFPYVLLVCAVGIVPCFYCFRIARVVYFDQPAMGAGHPALPHHLGLTVIAVVCMLLSVIALFLAQYFDILFQGLVWVFGGRT</sequence>
<reference key="1">
    <citation type="journal article" date="2009" name="BMC Genomics">
        <title>Conservation in the face of diversity: multistrain analysis of an intracellular bacterium.</title>
        <authorList>
            <person name="Dark M.J."/>
            <person name="Herndon D.R."/>
            <person name="Kappmeyer L.S."/>
            <person name="Gonzales M.P."/>
            <person name="Nordeen E."/>
            <person name="Palmer G.H."/>
            <person name="Knowles D.P. Jr."/>
            <person name="Brayton K.A."/>
        </authorList>
    </citation>
    <scope>NUCLEOTIDE SEQUENCE [LARGE SCALE GENOMIC DNA]</scope>
    <source>
        <strain>Florida</strain>
    </source>
</reference>
<feature type="chain" id="PRO_0000391095" description="NADH-quinone oxidoreductase subunit N">
    <location>
        <begin position="1"/>
        <end position="481"/>
    </location>
</feature>
<feature type="transmembrane region" description="Helical" evidence="1">
    <location>
        <begin position="9"/>
        <end position="29"/>
    </location>
</feature>
<feature type="transmembrane region" description="Helical" evidence="1">
    <location>
        <begin position="39"/>
        <end position="59"/>
    </location>
</feature>
<feature type="transmembrane region" description="Helical" evidence="1">
    <location>
        <begin position="76"/>
        <end position="96"/>
    </location>
</feature>
<feature type="transmembrane region" description="Helical" evidence="1">
    <location>
        <begin position="104"/>
        <end position="124"/>
    </location>
</feature>
<feature type="transmembrane region" description="Helical" evidence="1">
    <location>
        <begin position="158"/>
        <end position="178"/>
    </location>
</feature>
<feature type="transmembrane region" description="Helical" evidence="1">
    <location>
        <begin position="205"/>
        <end position="225"/>
    </location>
</feature>
<feature type="transmembrane region" description="Helical" evidence="1">
    <location>
        <begin position="232"/>
        <end position="252"/>
    </location>
</feature>
<feature type="transmembrane region" description="Helical" evidence="1">
    <location>
        <begin position="265"/>
        <end position="285"/>
    </location>
</feature>
<feature type="transmembrane region" description="Helical" evidence="1">
    <location>
        <begin position="293"/>
        <end position="313"/>
    </location>
</feature>
<feature type="transmembrane region" description="Helical" evidence="1">
    <location>
        <begin position="318"/>
        <end position="338"/>
    </location>
</feature>
<feature type="transmembrane region" description="Helical" evidence="1">
    <location>
        <begin position="359"/>
        <end position="379"/>
    </location>
</feature>
<feature type="transmembrane region" description="Helical" evidence="1">
    <location>
        <begin position="399"/>
        <end position="419"/>
    </location>
</feature>
<feature type="transmembrane region" description="Helical" evidence="1">
    <location>
        <begin position="443"/>
        <end position="463"/>
    </location>
</feature>
<accession>B9KIT6</accession>
<protein>
    <recommendedName>
        <fullName evidence="1">NADH-quinone oxidoreductase subunit N</fullName>
        <ecNumber evidence="1">7.1.1.-</ecNumber>
    </recommendedName>
    <alternativeName>
        <fullName evidence="1">NADH dehydrogenase I subunit N</fullName>
    </alternativeName>
    <alternativeName>
        <fullName evidence="1">NDH-1 subunit N</fullName>
    </alternativeName>
</protein>
<gene>
    <name evidence="1" type="primary">nuoN</name>
    <name type="ordered locus">AMF_549</name>
</gene>
<keyword id="KW-0997">Cell inner membrane</keyword>
<keyword id="KW-1003">Cell membrane</keyword>
<keyword id="KW-0472">Membrane</keyword>
<keyword id="KW-0520">NAD</keyword>
<keyword id="KW-0874">Quinone</keyword>
<keyword id="KW-1185">Reference proteome</keyword>
<keyword id="KW-1278">Translocase</keyword>
<keyword id="KW-0812">Transmembrane</keyword>
<keyword id="KW-1133">Transmembrane helix</keyword>
<keyword id="KW-0813">Transport</keyword>
<keyword id="KW-0830">Ubiquinone</keyword>
<organism>
    <name type="scientific">Anaplasma marginale (strain Florida)</name>
    <dbReference type="NCBI Taxonomy" id="320483"/>
    <lineage>
        <taxon>Bacteria</taxon>
        <taxon>Pseudomonadati</taxon>
        <taxon>Pseudomonadota</taxon>
        <taxon>Alphaproteobacteria</taxon>
        <taxon>Rickettsiales</taxon>
        <taxon>Anaplasmataceae</taxon>
        <taxon>Anaplasma</taxon>
    </lineage>
</organism>
<comment type="function">
    <text evidence="1">NDH-1 shuttles electrons from NADH, via FMN and iron-sulfur (Fe-S) centers, to quinones in the respiratory chain. The immediate electron acceptor for the enzyme in this species is believed to be ubiquinone. Couples the redox reaction to proton translocation (for every two electrons transferred, four hydrogen ions are translocated across the cytoplasmic membrane), and thus conserves the redox energy in a proton gradient.</text>
</comment>
<comment type="catalytic activity">
    <reaction evidence="1">
        <text>a quinone + NADH + 5 H(+)(in) = a quinol + NAD(+) + 4 H(+)(out)</text>
        <dbReference type="Rhea" id="RHEA:57888"/>
        <dbReference type="ChEBI" id="CHEBI:15378"/>
        <dbReference type="ChEBI" id="CHEBI:24646"/>
        <dbReference type="ChEBI" id="CHEBI:57540"/>
        <dbReference type="ChEBI" id="CHEBI:57945"/>
        <dbReference type="ChEBI" id="CHEBI:132124"/>
    </reaction>
</comment>
<comment type="subunit">
    <text evidence="1">NDH-1 is composed of 14 different subunits. Subunits NuoA, H, J, K, L, M, N constitute the membrane sector of the complex.</text>
</comment>
<comment type="subcellular location">
    <subcellularLocation>
        <location evidence="1">Cell inner membrane</location>
        <topology evidence="1">Multi-pass membrane protein</topology>
    </subcellularLocation>
</comment>
<comment type="similarity">
    <text evidence="1">Belongs to the complex I subunit 2 family.</text>
</comment>
<name>NUON_ANAMF</name>
<evidence type="ECO:0000255" key="1">
    <source>
        <dbReference type="HAMAP-Rule" id="MF_00445"/>
    </source>
</evidence>
<proteinExistence type="inferred from homology"/>
<dbReference type="EC" id="7.1.1.-" evidence="1"/>
<dbReference type="EMBL" id="CP001079">
    <property type="protein sequence ID" value="ACM49398.1"/>
    <property type="molecule type" value="Genomic_DNA"/>
</dbReference>
<dbReference type="RefSeq" id="WP_010267787.1">
    <property type="nucleotide sequence ID" value="NC_012026.1"/>
</dbReference>
<dbReference type="SMR" id="B9KIT6"/>
<dbReference type="STRING" id="320483.AMF_549"/>
<dbReference type="GeneID" id="7398164"/>
<dbReference type="KEGG" id="amf:AMF_549"/>
<dbReference type="PATRIC" id="fig|320483.3.peg.642"/>
<dbReference type="eggNOG" id="COG1007">
    <property type="taxonomic scope" value="Bacteria"/>
</dbReference>
<dbReference type="HOGENOM" id="CLU_007100_1_3_5"/>
<dbReference type="Proteomes" id="UP000007307">
    <property type="component" value="Chromosome"/>
</dbReference>
<dbReference type="GO" id="GO:0005886">
    <property type="term" value="C:plasma membrane"/>
    <property type="evidence" value="ECO:0007669"/>
    <property type="project" value="UniProtKB-SubCell"/>
</dbReference>
<dbReference type="GO" id="GO:0008137">
    <property type="term" value="F:NADH dehydrogenase (ubiquinone) activity"/>
    <property type="evidence" value="ECO:0007669"/>
    <property type="project" value="InterPro"/>
</dbReference>
<dbReference type="GO" id="GO:0050136">
    <property type="term" value="F:NADH:ubiquinone reductase (non-electrogenic) activity"/>
    <property type="evidence" value="ECO:0007669"/>
    <property type="project" value="UniProtKB-UniRule"/>
</dbReference>
<dbReference type="GO" id="GO:0048038">
    <property type="term" value="F:quinone binding"/>
    <property type="evidence" value="ECO:0007669"/>
    <property type="project" value="UniProtKB-KW"/>
</dbReference>
<dbReference type="GO" id="GO:0042773">
    <property type="term" value="P:ATP synthesis coupled electron transport"/>
    <property type="evidence" value="ECO:0007669"/>
    <property type="project" value="InterPro"/>
</dbReference>
<dbReference type="HAMAP" id="MF_00445">
    <property type="entry name" value="NDH1_NuoN_1"/>
    <property type="match status" value="1"/>
</dbReference>
<dbReference type="InterPro" id="IPR010096">
    <property type="entry name" value="NADH-Q_OxRdtase_suN/2"/>
</dbReference>
<dbReference type="InterPro" id="IPR001750">
    <property type="entry name" value="ND/Mrp_TM"/>
</dbReference>
<dbReference type="PANTHER" id="PTHR22773">
    <property type="entry name" value="NADH DEHYDROGENASE"/>
    <property type="match status" value="1"/>
</dbReference>
<dbReference type="Pfam" id="PF00361">
    <property type="entry name" value="Proton_antipo_M"/>
    <property type="match status" value="1"/>
</dbReference>